<dbReference type="EMBL" id="CP001279">
    <property type="protein sequence ID" value="ACM93208.1"/>
    <property type="molecule type" value="Genomic_DNA"/>
</dbReference>
<dbReference type="RefSeq" id="WP_015902260.1">
    <property type="nucleotide sequence ID" value="NC_012115.1"/>
</dbReference>
<dbReference type="SMR" id="B9L6T6"/>
<dbReference type="STRING" id="598659.NAMH_1694"/>
<dbReference type="KEGG" id="nam:NAMH_1694"/>
<dbReference type="eggNOG" id="COG0203">
    <property type="taxonomic scope" value="Bacteria"/>
</dbReference>
<dbReference type="HOGENOM" id="CLU_074407_2_2_7"/>
<dbReference type="OrthoDB" id="9809073at2"/>
<dbReference type="Proteomes" id="UP000000448">
    <property type="component" value="Chromosome"/>
</dbReference>
<dbReference type="GO" id="GO:0022625">
    <property type="term" value="C:cytosolic large ribosomal subunit"/>
    <property type="evidence" value="ECO:0007669"/>
    <property type="project" value="TreeGrafter"/>
</dbReference>
<dbReference type="GO" id="GO:0003735">
    <property type="term" value="F:structural constituent of ribosome"/>
    <property type="evidence" value="ECO:0007669"/>
    <property type="project" value="InterPro"/>
</dbReference>
<dbReference type="GO" id="GO:0006412">
    <property type="term" value="P:translation"/>
    <property type="evidence" value="ECO:0007669"/>
    <property type="project" value="UniProtKB-UniRule"/>
</dbReference>
<dbReference type="Gene3D" id="3.90.1030.10">
    <property type="entry name" value="Ribosomal protein L17"/>
    <property type="match status" value="1"/>
</dbReference>
<dbReference type="HAMAP" id="MF_01368">
    <property type="entry name" value="Ribosomal_bL17"/>
    <property type="match status" value="1"/>
</dbReference>
<dbReference type="InterPro" id="IPR000456">
    <property type="entry name" value="Ribosomal_bL17"/>
</dbReference>
<dbReference type="InterPro" id="IPR047859">
    <property type="entry name" value="Ribosomal_bL17_CS"/>
</dbReference>
<dbReference type="InterPro" id="IPR036373">
    <property type="entry name" value="Ribosomal_bL17_sf"/>
</dbReference>
<dbReference type="NCBIfam" id="TIGR00059">
    <property type="entry name" value="L17"/>
    <property type="match status" value="1"/>
</dbReference>
<dbReference type="PANTHER" id="PTHR14413:SF16">
    <property type="entry name" value="LARGE RIBOSOMAL SUBUNIT PROTEIN BL17M"/>
    <property type="match status" value="1"/>
</dbReference>
<dbReference type="PANTHER" id="PTHR14413">
    <property type="entry name" value="RIBOSOMAL PROTEIN L17"/>
    <property type="match status" value="1"/>
</dbReference>
<dbReference type="Pfam" id="PF01196">
    <property type="entry name" value="Ribosomal_L17"/>
    <property type="match status" value="1"/>
</dbReference>
<dbReference type="SUPFAM" id="SSF64263">
    <property type="entry name" value="Prokaryotic ribosomal protein L17"/>
    <property type="match status" value="1"/>
</dbReference>
<dbReference type="PROSITE" id="PS01167">
    <property type="entry name" value="RIBOSOMAL_L17"/>
    <property type="match status" value="1"/>
</dbReference>
<reference key="1">
    <citation type="journal article" date="2009" name="PLoS Genet.">
        <title>Adaptations to submarine hydrothermal environments exemplified by the genome of Nautilia profundicola.</title>
        <authorList>
            <person name="Campbell B.J."/>
            <person name="Smith J.L."/>
            <person name="Hanson T.E."/>
            <person name="Klotz M.G."/>
            <person name="Stein L.Y."/>
            <person name="Lee C.K."/>
            <person name="Wu D."/>
            <person name="Robinson J.M."/>
            <person name="Khouri H.M."/>
            <person name="Eisen J.A."/>
            <person name="Cary S.C."/>
        </authorList>
    </citation>
    <scope>NUCLEOTIDE SEQUENCE [LARGE SCALE GENOMIC DNA]</scope>
    <source>
        <strain>ATCC BAA-1463 / DSM 18972 / AmH</strain>
    </source>
</reference>
<comment type="subunit">
    <text evidence="1">Part of the 50S ribosomal subunit. Contacts protein L32.</text>
</comment>
<comment type="similarity">
    <text evidence="1">Belongs to the bacterial ribosomal protein bL17 family.</text>
</comment>
<name>RL17_NAUPA</name>
<evidence type="ECO:0000255" key="1">
    <source>
        <dbReference type="HAMAP-Rule" id="MF_01368"/>
    </source>
</evidence>
<evidence type="ECO:0000305" key="2"/>
<proteinExistence type="inferred from homology"/>
<sequence>MRHKHGYRKLGRVSEHRQALLRNLACDLIENGRIETTVPKAKELRKYVEKLITKSKNADLNTHRYVYSKLGSNERAKAATRKVIEEIAPKFENRKGGYTRIIKTRFRRGDAAEMCIIEFVGE</sequence>
<keyword id="KW-0687">Ribonucleoprotein</keyword>
<keyword id="KW-0689">Ribosomal protein</keyword>
<feature type="chain" id="PRO_1000184035" description="Large ribosomal subunit protein bL17">
    <location>
        <begin position="1"/>
        <end position="122"/>
    </location>
</feature>
<gene>
    <name evidence="1" type="primary">rplQ</name>
    <name type="ordered locus">NAMH_1694</name>
</gene>
<accession>B9L6T6</accession>
<protein>
    <recommendedName>
        <fullName evidence="1">Large ribosomal subunit protein bL17</fullName>
    </recommendedName>
    <alternativeName>
        <fullName evidence="2">50S ribosomal protein L17</fullName>
    </alternativeName>
</protein>
<organism>
    <name type="scientific">Nautilia profundicola (strain ATCC BAA-1463 / DSM 18972 / AmH)</name>
    <dbReference type="NCBI Taxonomy" id="598659"/>
    <lineage>
        <taxon>Bacteria</taxon>
        <taxon>Pseudomonadati</taxon>
        <taxon>Campylobacterota</taxon>
        <taxon>Epsilonproteobacteria</taxon>
        <taxon>Nautiliales</taxon>
        <taxon>Nautiliaceae</taxon>
        <taxon>Nautilia</taxon>
    </lineage>
</organism>